<comment type="function">
    <text evidence="1">Catalyzes the formation of phosphatidylethanolamine (PtdEtn) from phosphatidylserine (PtdSer).</text>
</comment>
<comment type="catalytic activity">
    <reaction evidence="1">
        <text>a 1,2-diacyl-sn-glycero-3-phospho-L-serine + H(+) = a 1,2-diacyl-sn-glycero-3-phosphoethanolamine + CO2</text>
        <dbReference type="Rhea" id="RHEA:20828"/>
        <dbReference type="ChEBI" id="CHEBI:15378"/>
        <dbReference type="ChEBI" id="CHEBI:16526"/>
        <dbReference type="ChEBI" id="CHEBI:57262"/>
        <dbReference type="ChEBI" id="CHEBI:64612"/>
        <dbReference type="EC" id="4.1.1.65"/>
    </reaction>
</comment>
<comment type="cofactor">
    <cofactor evidence="1">
        <name>pyruvate</name>
        <dbReference type="ChEBI" id="CHEBI:15361"/>
    </cofactor>
    <text evidence="1">Binds 1 pyruvoyl group covalently per subunit.</text>
</comment>
<comment type="pathway">
    <text evidence="1">Phospholipid metabolism; phosphatidylethanolamine biosynthesis; phosphatidylethanolamine from CDP-diacylglycerol: step 2/2.</text>
</comment>
<comment type="subunit">
    <text evidence="1">Heterodimer of a large membrane-associated beta subunit and a small pyruvoyl-containing alpha subunit.</text>
</comment>
<comment type="subcellular location">
    <subcellularLocation>
        <location evidence="1">Cell membrane</location>
        <topology evidence="1">Peripheral membrane protein</topology>
    </subcellularLocation>
</comment>
<comment type="PTM">
    <text evidence="1">Is synthesized initially as an inactive proenzyme. Formation of the active enzyme involves a self-maturation process in which the active site pyruvoyl group is generated from an internal serine residue via an autocatalytic post-translational modification. Two non-identical subunits are generated from the proenzyme in this reaction, and the pyruvate is formed at the N-terminus of the alpha chain, which is derived from the carboxyl end of the proenzyme. The autoendoproteolytic cleavage occurs by a canonical serine protease mechanism, in which the side chain hydroxyl group of the serine supplies its oxygen atom to form the C-terminus of the beta chain, while the remainder of the serine residue undergoes an oxidative deamination to produce ammonia and the pyruvoyl prosthetic group on the alpha chain. During this reaction, the Ser that is part of the protease active site of the proenzyme becomes the pyruvoyl prosthetic group, which constitutes an essential element of the active site of the mature decarboxylase.</text>
</comment>
<comment type="similarity">
    <text evidence="1">Belongs to the phosphatidylserine decarboxylase family. PSD-B subfamily. Prokaryotic type I sub-subfamily.</text>
</comment>
<feature type="chain" id="PRO_1000212485" description="Phosphatidylserine decarboxylase beta chain" evidence="1">
    <location>
        <begin position="1"/>
        <end position="253"/>
    </location>
</feature>
<feature type="chain" id="PRO_1000212486" description="Phosphatidylserine decarboxylase alpha chain" evidence="1">
    <location>
        <begin position="254"/>
        <end position="288"/>
    </location>
</feature>
<feature type="active site" description="Charge relay system; for autoendoproteolytic cleavage activity" evidence="1">
    <location>
        <position position="90"/>
    </location>
</feature>
<feature type="active site" description="Charge relay system; for autoendoproteolytic cleavage activity" evidence="1">
    <location>
        <position position="147"/>
    </location>
</feature>
<feature type="active site" description="Charge relay system; for autoendoproteolytic cleavage activity" evidence="1">
    <location>
        <position position="254"/>
    </location>
</feature>
<feature type="active site" description="Schiff-base intermediate with substrate; via pyruvic acid; for decarboxylase activity" evidence="1">
    <location>
        <position position="254"/>
    </location>
</feature>
<feature type="site" description="Cleavage (non-hydrolytic); by autocatalysis" evidence="1">
    <location>
        <begin position="253"/>
        <end position="254"/>
    </location>
</feature>
<feature type="modified residue" description="Pyruvic acid (Ser); by autocatalysis" evidence="1">
    <location>
        <position position="254"/>
    </location>
</feature>
<protein>
    <recommendedName>
        <fullName evidence="1">Phosphatidylserine decarboxylase proenzyme</fullName>
        <ecNumber evidence="1">4.1.1.65</ecNumber>
    </recommendedName>
    <component>
        <recommendedName>
            <fullName evidence="1">Phosphatidylserine decarboxylase alpha chain</fullName>
        </recommendedName>
    </component>
    <component>
        <recommendedName>
            <fullName evidence="1">Phosphatidylserine decarboxylase beta chain</fullName>
        </recommendedName>
    </component>
</protein>
<sequence length="288" mass="32107">MLKKLKIKLQYLLPQHALTRLAGWAANKKAGWLTQQVIKIFASYYRVNIKEAQYTEFSAYSSFNEFFIRSLRSDVRPIAAGDNILVQPADGTISESGRIDKDKILQAKGHDYSLEALLAGQSLLAKEFENGQFVTTYLAPGDYHRVHMPCDGVLREMIYVPGSLFSVNAFFAENVPYLFARNERVICIFNTAFGTMAQILVGAMIVGSIETLWSGPVDSQRKGIIQRWVYPDEGSEAPIILKKGEEMGLFKLGSTVINLFVSNKIKLASHLQNGSITRLGEILGEAPH</sequence>
<keyword id="KW-1003">Cell membrane</keyword>
<keyword id="KW-0210">Decarboxylase</keyword>
<keyword id="KW-0444">Lipid biosynthesis</keyword>
<keyword id="KW-0443">Lipid metabolism</keyword>
<keyword id="KW-0456">Lyase</keyword>
<keyword id="KW-0472">Membrane</keyword>
<keyword id="KW-0594">Phospholipid biosynthesis</keyword>
<keyword id="KW-1208">Phospholipid metabolism</keyword>
<keyword id="KW-0670">Pyruvate</keyword>
<keyword id="KW-0865">Zymogen</keyword>
<name>PSD_HAMD5</name>
<proteinExistence type="inferred from homology"/>
<organism>
    <name type="scientific">Hamiltonella defensa subsp. Acyrthosiphon pisum (strain 5AT)</name>
    <dbReference type="NCBI Taxonomy" id="572265"/>
    <lineage>
        <taxon>Bacteria</taxon>
        <taxon>Pseudomonadati</taxon>
        <taxon>Pseudomonadota</taxon>
        <taxon>Gammaproteobacteria</taxon>
        <taxon>Enterobacterales</taxon>
        <taxon>Enterobacteriaceae</taxon>
        <taxon>aphid secondary symbionts</taxon>
        <taxon>Candidatus Hamiltonella</taxon>
    </lineage>
</organism>
<reference key="1">
    <citation type="journal article" date="2009" name="Proc. Natl. Acad. Sci. U.S.A.">
        <title>Hamiltonella defensa, genome evolution of protective bacterial endosymbiont from pathogenic ancestors.</title>
        <authorList>
            <person name="Degnan P.H."/>
            <person name="Yu Y."/>
            <person name="Sisneros N."/>
            <person name="Wing R.A."/>
            <person name="Moran N.A."/>
        </authorList>
    </citation>
    <scope>NUCLEOTIDE SEQUENCE [LARGE SCALE GENOMIC DNA]</scope>
    <source>
        <strain>5AT</strain>
    </source>
</reference>
<dbReference type="EC" id="4.1.1.65" evidence="1"/>
<dbReference type="EMBL" id="CP001277">
    <property type="protein sequence ID" value="ACQ67232.1"/>
    <property type="molecule type" value="Genomic_DNA"/>
</dbReference>
<dbReference type="RefSeq" id="WP_012738189.1">
    <property type="nucleotide sequence ID" value="NC_012751.1"/>
</dbReference>
<dbReference type="SMR" id="C4K3T9"/>
<dbReference type="STRING" id="572265.HDEF_0478"/>
<dbReference type="GeneID" id="66260369"/>
<dbReference type="KEGG" id="hde:HDEF_0478"/>
<dbReference type="eggNOG" id="COG0688">
    <property type="taxonomic scope" value="Bacteria"/>
</dbReference>
<dbReference type="HOGENOM" id="CLU_029061_4_1_6"/>
<dbReference type="UniPathway" id="UPA00558">
    <property type="reaction ID" value="UER00616"/>
</dbReference>
<dbReference type="Proteomes" id="UP000002334">
    <property type="component" value="Chromosome"/>
</dbReference>
<dbReference type="GO" id="GO:0005886">
    <property type="term" value="C:plasma membrane"/>
    <property type="evidence" value="ECO:0007669"/>
    <property type="project" value="UniProtKB-SubCell"/>
</dbReference>
<dbReference type="GO" id="GO:0004609">
    <property type="term" value="F:phosphatidylserine decarboxylase activity"/>
    <property type="evidence" value="ECO:0007669"/>
    <property type="project" value="UniProtKB-UniRule"/>
</dbReference>
<dbReference type="GO" id="GO:0006646">
    <property type="term" value="P:phosphatidylethanolamine biosynthetic process"/>
    <property type="evidence" value="ECO:0007669"/>
    <property type="project" value="UniProtKB-UniRule"/>
</dbReference>
<dbReference type="HAMAP" id="MF_00662">
    <property type="entry name" value="PS_decarb_PSD_B_type1"/>
    <property type="match status" value="1"/>
</dbReference>
<dbReference type="InterPro" id="IPR003817">
    <property type="entry name" value="PS_Dcarbxylase"/>
</dbReference>
<dbReference type="InterPro" id="IPR033177">
    <property type="entry name" value="PSD-B"/>
</dbReference>
<dbReference type="InterPro" id="IPR033178">
    <property type="entry name" value="PSD_type1_pro"/>
</dbReference>
<dbReference type="NCBIfam" id="TIGR00163">
    <property type="entry name" value="PS_decarb"/>
    <property type="match status" value="1"/>
</dbReference>
<dbReference type="PANTHER" id="PTHR10067">
    <property type="entry name" value="PHOSPHATIDYLSERINE DECARBOXYLASE"/>
    <property type="match status" value="1"/>
</dbReference>
<dbReference type="PANTHER" id="PTHR10067:SF6">
    <property type="entry name" value="PHOSPHATIDYLSERINE DECARBOXYLASE PROENZYME, MITOCHONDRIAL"/>
    <property type="match status" value="1"/>
</dbReference>
<dbReference type="Pfam" id="PF02666">
    <property type="entry name" value="PS_Dcarbxylase"/>
    <property type="match status" value="1"/>
</dbReference>
<evidence type="ECO:0000255" key="1">
    <source>
        <dbReference type="HAMAP-Rule" id="MF_00662"/>
    </source>
</evidence>
<accession>C4K3T9</accession>
<gene>
    <name evidence="1" type="primary">psd</name>
    <name type="ordered locus">HDEF_0478</name>
</gene>